<feature type="chain" id="PRO_0000187976" description="ATP-dependent dethiobiotin synthetase BioD">
    <location>
        <begin position="1"/>
        <end position="226"/>
    </location>
</feature>
<feature type="active site" evidence="1">
    <location>
        <position position="37"/>
    </location>
</feature>
<feature type="binding site" evidence="1">
    <location>
        <begin position="12"/>
        <end position="17"/>
    </location>
    <ligand>
        <name>ATP</name>
        <dbReference type="ChEBI" id="CHEBI:30616"/>
    </ligand>
</feature>
<feature type="binding site" evidence="1">
    <location>
        <position position="16"/>
    </location>
    <ligand>
        <name>Mg(2+)</name>
        <dbReference type="ChEBI" id="CHEBI:18420"/>
    </ligand>
</feature>
<feature type="binding site" evidence="1">
    <location>
        <position position="41"/>
    </location>
    <ligand>
        <name>substrate</name>
    </ligand>
</feature>
<feature type="binding site" evidence="1">
    <location>
        <position position="49"/>
    </location>
    <ligand>
        <name>ATP</name>
        <dbReference type="ChEBI" id="CHEBI:30616"/>
    </ligand>
</feature>
<feature type="binding site" evidence="1">
    <location>
        <position position="49"/>
    </location>
    <ligand>
        <name>Mg(2+)</name>
        <dbReference type="ChEBI" id="CHEBI:18420"/>
    </ligand>
</feature>
<feature type="binding site" evidence="1">
    <location>
        <begin position="108"/>
        <end position="111"/>
    </location>
    <ligand>
        <name>ATP</name>
        <dbReference type="ChEBI" id="CHEBI:30616"/>
    </ligand>
</feature>
<feature type="binding site" evidence="1">
    <location>
        <position position="108"/>
    </location>
    <ligand>
        <name>Mg(2+)</name>
        <dbReference type="ChEBI" id="CHEBI:18420"/>
    </ligand>
</feature>
<feature type="binding site" evidence="1">
    <location>
        <begin position="169"/>
        <end position="170"/>
    </location>
    <ligand>
        <name>ATP</name>
        <dbReference type="ChEBI" id="CHEBI:30616"/>
    </ligand>
</feature>
<feature type="binding site" evidence="1">
    <location>
        <begin position="197"/>
        <end position="199"/>
    </location>
    <ligand>
        <name>ATP</name>
        <dbReference type="ChEBI" id="CHEBI:30616"/>
    </ligand>
</feature>
<comment type="function">
    <text evidence="1">Catalyzes a mechanistically unusual reaction, the ATP-dependent insertion of CO2 between the N7 and N8 nitrogen atoms of 7,8-diaminopelargonic acid (DAPA, also called 7,8-diammoniononanoate) to form a ureido ring.</text>
</comment>
<comment type="catalytic activity">
    <reaction evidence="1">
        <text>(7R,8S)-7,8-diammoniononanoate + CO2 + ATP = (4R,5S)-dethiobiotin + ADP + phosphate + 3 H(+)</text>
        <dbReference type="Rhea" id="RHEA:15805"/>
        <dbReference type="ChEBI" id="CHEBI:15378"/>
        <dbReference type="ChEBI" id="CHEBI:16526"/>
        <dbReference type="ChEBI" id="CHEBI:30616"/>
        <dbReference type="ChEBI" id="CHEBI:43474"/>
        <dbReference type="ChEBI" id="CHEBI:149469"/>
        <dbReference type="ChEBI" id="CHEBI:149473"/>
        <dbReference type="ChEBI" id="CHEBI:456216"/>
        <dbReference type="EC" id="6.3.3.3"/>
    </reaction>
</comment>
<comment type="cofactor">
    <cofactor evidence="1">
        <name>Mg(2+)</name>
        <dbReference type="ChEBI" id="CHEBI:18420"/>
    </cofactor>
</comment>
<comment type="pathway">
    <text evidence="1">Cofactor biosynthesis; biotin biosynthesis; biotin from 7,8-diaminononanoate: step 1/2.</text>
</comment>
<comment type="subunit">
    <text evidence="1">Homodimer.</text>
</comment>
<comment type="subcellular location">
    <subcellularLocation>
        <location evidence="1">Cytoplasm</location>
    </subcellularLocation>
</comment>
<comment type="similarity">
    <text evidence="1">Belongs to the dethiobiotin synthetase family.</text>
</comment>
<comment type="sequence caution" evidence="2">
    <conflict type="erroneous initiation">
        <sequence resource="EMBL-CDS" id="AAA17057"/>
    </conflict>
    <text>Truncated N-terminus.</text>
</comment>
<reference key="1">
    <citation type="submission" date="1994-03" db="EMBL/GenBank/DDBJ databases">
        <authorList>
            <person name="Smith D.R."/>
            <person name="Robison K."/>
        </authorList>
    </citation>
    <scope>NUCLEOTIDE SEQUENCE [GENOMIC DNA]</scope>
</reference>
<reference key="2">
    <citation type="journal article" date="2001" name="Nature">
        <title>Massive gene decay in the leprosy bacillus.</title>
        <authorList>
            <person name="Cole S.T."/>
            <person name="Eiglmeier K."/>
            <person name="Parkhill J."/>
            <person name="James K.D."/>
            <person name="Thomson N.R."/>
            <person name="Wheeler P.R."/>
            <person name="Honore N."/>
            <person name="Garnier T."/>
            <person name="Churcher C.M."/>
            <person name="Harris D.E."/>
            <person name="Mungall K.L."/>
            <person name="Basham D."/>
            <person name="Brown D."/>
            <person name="Chillingworth T."/>
            <person name="Connor R."/>
            <person name="Davies R.M."/>
            <person name="Devlin K."/>
            <person name="Duthoy S."/>
            <person name="Feltwell T."/>
            <person name="Fraser A."/>
            <person name="Hamlin N."/>
            <person name="Holroyd S."/>
            <person name="Hornsby T."/>
            <person name="Jagels K."/>
            <person name="Lacroix C."/>
            <person name="Maclean J."/>
            <person name="Moule S."/>
            <person name="Murphy L.D."/>
            <person name="Oliver K."/>
            <person name="Quail M.A."/>
            <person name="Rajandream M.A."/>
            <person name="Rutherford K.M."/>
            <person name="Rutter S."/>
            <person name="Seeger K."/>
            <person name="Simon S."/>
            <person name="Simmonds M."/>
            <person name="Skelton J."/>
            <person name="Squares R."/>
            <person name="Squares S."/>
            <person name="Stevens K."/>
            <person name="Taylor K."/>
            <person name="Whitehead S."/>
            <person name="Woodward J.R."/>
            <person name="Barrell B.G."/>
        </authorList>
    </citation>
    <scope>NUCLEOTIDE SEQUENCE [LARGE SCALE GENOMIC DNA]</scope>
    <source>
        <strain>TN</strain>
    </source>
</reference>
<organism>
    <name type="scientific">Mycobacterium leprae (strain TN)</name>
    <dbReference type="NCBI Taxonomy" id="272631"/>
    <lineage>
        <taxon>Bacteria</taxon>
        <taxon>Bacillati</taxon>
        <taxon>Actinomycetota</taxon>
        <taxon>Actinomycetes</taxon>
        <taxon>Mycobacteriales</taxon>
        <taxon>Mycobacteriaceae</taxon>
        <taxon>Mycobacterium</taxon>
    </lineage>
</organism>
<protein>
    <recommendedName>
        <fullName evidence="1">ATP-dependent dethiobiotin synthetase BioD</fullName>
        <ecNumber evidence="1">6.3.3.3</ecNumber>
    </recommendedName>
    <alternativeName>
        <fullName evidence="1">DTB synthetase</fullName>
        <shortName evidence="1">DTBS</shortName>
    </alternativeName>
    <alternativeName>
        <fullName evidence="1">Dethiobiotin synthase</fullName>
    </alternativeName>
</protein>
<evidence type="ECO:0000255" key="1">
    <source>
        <dbReference type="HAMAP-Rule" id="MF_00336"/>
    </source>
</evidence>
<evidence type="ECO:0000305" key="2"/>
<name>BIOD_MYCLE</name>
<gene>
    <name evidence="1" type="primary">bioD</name>
    <name type="ordered locus">ML1218</name>
    <name type="ORF">B1170_C1_159</name>
</gene>
<sequence length="226" mass="22923">MTVVVVTGTDTGVGKTVACAALACHARQAGIEVAVCKPVQTGTQIGDDDLAEVARLSGVTELTGLVRYPQPLAPAAAAEHAGMALPTREQLLELIAGLDRPGRLILVEGAGGLLVELADASATLRDLAVELGALALVTVSVELGTLNHTALTLEALTTRGVACAGLVIGSWTGRPGAVQISNRSALARLAPMRATLPAGAGSMDATDFAAMSAAAFDRDWVTTLVH</sequence>
<accession>P45486</accession>
<keyword id="KW-0067">ATP-binding</keyword>
<keyword id="KW-0093">Biotin biosynthesis</keyword>
<keyword id="KW-0963">Cytoplasm</keyword>
<keyword id="KW-0436">Ligase</keyword>
<keyword id="KW-0460">Magnesium</keyword>
<keyword id="KW-0479">Metal-binding</keyword>
<keyword id="KW-0547">Nucleotide-binding</keyword>
<keyword id="KW-1185">Reference proteome</keyword>
<proteinExistence type="inferred from homology"/>
<dbReference type="EC" id="6.3.3.3" evidence="1"/>
<dbReference type="EMBL" id="U00010">
    <property type="protein sequence ID" value="AAA17057.1"/>
    <property type="status" value="ALT_INIT"/>
    <property type="molecule type" value="Genomic_DNA"/>
</dbReference>
<dbReference type="EMBL" id="AL583921">
    <property type="protein sequence ID" value="CAC31599.1"/>
    <property type="molecule type" value="Genomic_DNA"/>
</dbReference>
<dbReference type="PIR" id="D87061">
    <property type="entry name" value="D87061"/>
</dbReference>
<dbReference type="PIR" id="S72693">
    <property type="entry name" value="S72693"/>
</dbReference>
<dbReference type="RefSeq" id="NP_301882.1">
    <property type="nucleotide sequence ID" value="NC_002677.1"/>
</dbReference>
<dbReference type="RefSeq" id="WP_010908203.1">
    <property type="nucleotide sequence ID" value="NC_002677.1"/>
</dbReference>
<dbReference type="SMR" id="P45486"/>
<dbReference type="STRING" id="272631.gene:17575049"/>
<dbReference type="KEGG" id="mle:ML1218"/>
<dbReference type="PATRIC" id="fig|272631.5.peg.2237"/>
<dbReference type="Leproma" id="ML1218"/>
<dbReference type="eggNOG" id="COG0132">
    <property type="taxonomic scope" value="Bacteria"/>
</dbReference>
<dbReference type="HOGENOM" id="CLU_072551_1_0_11"/>
<dbReference type="OrthoDB" id="9802610at2"/>
<dbReference type="UniPathway" id="UPA00078">
    <property type="reaction ID" value="UER00161"/>
</dbReference>
<dbReference type="Proteomes" id="UP000000806">
    <property type="component" value="Chromosome"/>
</dbReference>
<dbReference type="GO" id="GO:0005829">
    <property type="term" value="C:cytosol"/>
    <property type="evidence" value="ECO:0007669"/>
    <property type="project" value="TreeGrafter"/>
</dbReference>
<dbReference type="GO" id="GO:0005524">
    <property type="term" value="F:ATP binding"/>
    <property type="evidence" value="ECO:0007669"/>
    <property type="project" value="UniProtKB-UniRule"/>
</dbReference>
<dbReference type="GO" id="GO:0004141">
    <property type="term" value="F:dethiobiotin synthase activity"/>
    <property type="evidence" value="ECO:0007669"/>
    <property type="project" value="UniProtKB-UniRule"/>
</dbReference>
<dbReference type="GO" id="GO:0000287">
    <property type="term" value="F:magnesium ion binding"/>
    <property type="evidence" value="ECO:0007669"/>
    <property type="project" value="UniProtKB-UniRule"/>
</dbReference>
<dbReference type="GO" id="GO:0009102">
    <property type="term" value="P:biotin biosynthetic process"/>
    <property type="evidence" value="ECO:0007669"/>
    <property type="project" value="UniProtKB-UniRule"/>
</dbReference>
<dbReference type="CDD" id="cd03109">
    <property type="entry name" value="DTBS"/>
    <property type="match status" value="1"/>
</dbReference>
<dbReference type="FunFam" id="3.40.50.300:FF:002079">
    <property type="entry name" value="ATP-dependent dethiobiotin synthetase BioD"/>
    <property type="match status" value="1"/>
</dbReference>
<dbReference type="Gene3D" id="3.40.50.300">
    <property type="entry name" value="P-loop containing nucleotide triphosphate hydrolases"/>
    <property type="match status" value="1"/>
</dbReference>
<dbReference type="HAMAP" id="MF_00336">
    <property type="entry name" value="BioD"/>
    <property type="match status" value="1"/>
</dbReference>
<dbReference type="InterPro" id="IPR004472">
    <property type="entry name" value="DTB_synth_BioD"/>
</dbReference>
<dbReference type="InterPro" id="IPR027417">
    <property type="entry name" value="P-loop_NTPase"/>
</dbReference>
<dbReference type="NCBIfam" id="TIGR00347">
    <property type="entry name" value="bioD"/>
    <property type="match status" value="1"/>
</dbReference>
<dbReference type="PANTHER" id="PTHR43210">
    <property type="entry name" value="DETHIOBIOTIN SYNTHETASE"/>
    <property type="match status" value="1"/>
</dbReference>
<dbReference type="PANTHER" id="PTHR43210:SF5">
    <property type="entry name" value="DETHIOBIOTIN SYNTHETASE"/>
    <property type="match status" value="1"/>
</dbReference>
<dbReference type="Pfam" id="PF13500">
    <property type="entry name" value="AAA_26"/>
    <property type="match status" value="1"/>
</dbReference>
<dbReference type="SUPFAM" id="SSF52540">
    <property type="entry name" value="P-loop containing nucleoside triphosphate hydrolases"/>
    <property type="match status" value="1"/>
</dbReference>